<reference evidence="11" key="1">
    <citation type="journal article" date="2004" name="Nature">
        <title>Sequence and comparative analysis of the chicken genome provide unique perspectives on vertebrate evolution.</title>
        <authorList>
            <person name="Hillier L.W."/>
            <person name="Miller W."/>
            <person name="Birney E."/>
            <person name="Warren W."/>
            <person name="Hardison R.C."/>
            <person name="Ponting C.P."/>
            <person name="Bork P."/>
            <person name="Burt D.W."/>
            <person name="Groenen M.A.M."/>
            <person name="Delany M.E."/>
            <person name="Dodgson J.B."/>
            <person name="Chinwalla A.T."/>
            <person name="Cliften P.F."/>
            <person name="Clifton S.W."/>
            <person name="Delehaunty K.D."/>
            <person name="Fronick C."/>
            <person name="Fulton R.S."/>
            <person name="Graves T.A."/>
            <person name="Kremitzki C."/>
            <person name="Layman D."/>
            <person name="Magrini V."/>
            <person name="McPherson J.D."/>
            <person name="Miner T.L."/>
            <person name="Minx P."/>
            <person name="Nash W.E."/>
            <person name="Nhan M.N."/>
            <person name="Nelson J.O."/>
            <person name="Oddy L.G."/>
            <person name="Pohl C.S."/>
            <person name="Randall-Maher J."/>
            <person name="Smith S.M."/>
            <person name="Wallis J.W."/>
            <person name="Yang S.-P."/>
            <person name="Romanov M.N."/>
            <person name="Rondelli C.M."/>
            <person name="Paton B."/>
            <person name="Smith J."/>
            <person name="Morrice D."/>
            <person name="Daniels L."/>
            <person name="Tempest H.G."/>
            <person name="Robertson L."/>
            <person name="Masabanda J.S."/>
            <person name="Griffin D.K."/>
            <person name="Vignal A."/>
            <person name="Fillon V."/>
            <person name="Jacobbson L."/>
            <person name="Kerje S."/>
            <person name="Andersson L."/>
            <person name="Crooijmans R.P."/>
            <person name="Aerts J."/>
            <person name="van der Poel J.J."/>
            <person name="Ellegren H."/>
            <person name="Caldwell R.B."/>
            <person name="Hubbard S.J."/>
            <person name="Grafham D.V."/>
            <person name="Kierzek A.M."/>
            <person name="McLaren S.R."/>
            <person name="Overton I.M."/>
            <person name="Arakawa H."/>
            <person name="Beattie K.J."/>
            <person name="Bezzubov Y."/>
            <person name="Boardman P.E."/>
            <person name="Bonfield J.K."/>
            <person name="Croning M.D.R."/>
            <person name="Davies R.M."/>
            <person name="Francis M.D."/>
            <person name="Humphray S.J."/>
            <person name="Scott C.E."/>
            <person name="Taylor R.G."/>
            <person name="Tickle C."/>
            <person name="Brown W.R.A."/>
            <person name="Rogers J."/>
            <person name="Buerstedde J.-M."/>
            <person name="Wilson S.A."/>
            <person name="Stubbs L."/>
            <person name="Ovcharenko I."/>
            <person name="Gordon L."/>
            <person name="Lucas S."/>
            <person name="Miller M.M."/>
            <person name="Inoko H."/>
            <person name="Shiina T."/>
            <person name="Kaufman J."/>
            <person name="Salomonsen J."/>
            <person name="Skjoedt K."/>
            <person name="Wong G.K.-S."/>
            <person name="Wang J."/>
            <person name="Liu B."/>
            <person name="Wang J."/>
            <person name="Yu J."/>
            <person name="Yang H."/>
            <person name="Nefedov M."/>
            <person name="Koriabine M."/>
            <person name="Dejong P.J."/>
            <person name="Goodstadt L."/>
            <person name="Webber C."/>
            <person name="Dickens N.J."/>
            <person name="Letunic I."/>
            <person name="Suyama M."/>
            <person name="Torrents D."/>
            <person name="von Mering C."/>
            <person name="Zdobnov E.M."/>
            <person name="Makova K."/>
            <person name="Nekrutenko A."/>
            <person name="Elnitski L."/>
            <person name="Eswara P."/>
            <person name="King D.C."/>
            <person name="Yang S.-P."/>
            <person name="Tyekucheva S."/>
            <person name="Radakrishnan A."/>
            <person name="Harris R.S."/>
            <person name="Chiaromonte F."/>
            <person name="Taylor J."/>
            <person name="He J."/>
            <person name="Rijnkels M."/>
            <person name="Griffiths-Jones S."/>
            <person name="Ureta-Vidal A."/>
            <person name="Hoffman M.M."/>
            <person name="Severin J."/>
            <person name="Searle S.M.J."/>
            <person name="Law A.S."/>
            <person name="Speed D."/>
            <person name="Waddington D."/>
            <person name="Cheng Z."/>
            <person name="Tuzun E."/>
            <person name="Eichler E."/>
            <person name="Bao Z."/>
            <person name="Flicek P."/>
            <person name="Shteynberg D.D."/>
            <person name="Brent M.R."/>
            <person name="Bye J.M."/>
            <person name="Huckle E.J."/>
            <person name="Chatterji S."/>
            <person name="Dewey C."/>
            <person name="Pachter L."/>
            <person name="Kouranov A."/>
            <person name="Mourelatos Z."/>
            <person name="Hatzigeorgiou A.G."/>
            <person name="Paterson A.H."/>
            <person name="Ivarie R."/>
            <person name="Brandstrom M."/>
            <person name="Axelsson E."/>
            <person name="Backstrom N."/>
            <person name="Berlin S."/>
            <person name="Webster M.T."/>
            <person name="Pourquie O."/>
            <person name="Reymond A."/>
            <person name="Ucla C."/>
            <person name="Antonarakis S.E."/>
            <person name="Long M."/>
            <person name="Emerson J.J."/>
            <person name="Betran E."/>
            <person name="Dupanloup I."/>
            <person name="Kaessmann H."/>
            <person name="Hinrichs A.S."/>
            <person name="Bejerano G."/>
            <person name="Furey T.S."/>
            <person name="Harte R.A."/>
            <person name="Raney B."/>
            <person name="Siepel A."/>
            <person name="Kent W.J."/>
            <person name="Haussler D."/>
            <person name="Eyras E."/>
            <person name="Castelo R."/>
            <person name="Abril J.F."/>
            <person name="Castellano S."/>
            <person name="Camara F."/>
            <person name="Parra G."/>
            <person name="Guigo R."/>
            <person name="Bourque G."/>
            <person name="Tesler G."/>
            <person name="Pevzner P.A."/>
            <person name="Smit A."/>
            <person name="Fulton L.A."/>
            <person name="Mardis E.R."/>
            <person name="Wilson R.K."/>
        </authorList>
    </citation>
    <scope>NUCLEOTIDE SEQUENCE [LARGE SCALE GENOMIC DNA]</scope>
    <source>
        <strain evidence="11">Red jungle fowl</strain>
    </source>
</reference>
<reference evidence="10" key="2">
    <citation type="journal article" date="2002" name="Mech. Dev.">
        <title>The paired-type homeobox gene Dmbx1 marks the midbrain and pretectum.</title>
        <authorList>
            <person name="Gogoi R.N."/>
            <person name="Schubert F.R."/>
            <person name="Martinez-Barbera J.-P."/>
            <person name="Acampora D."/>
            <person name="Simeone A."/>
            <person name="Lumsden A."/>
        </authorList>
    </citation>
    <scope>NUCLEOTIDE SEQUENCE [MRNA] OF 5-306</scope>
    <scope>TISSUE SPECIFICITY</scope>
    <scope>DEVELOPMENTAL STAGE</scope>
</reference>
<reference evidence="9" key="3">
    <citation type="journal article" date="2001" name="Development">
        <title>Regionalisation of anterior neuroectoderm and its competence in responding to forebrain and midbrain inducing activities depend on mutual antagonism between OTX2 and GBX2.</title>
        <authorList>
            <person name="Martinez-Barbera J.P."/>
            <person name="Signore M."/>
            <person name="Boyl P.P."/>
            <person name="Puelles E."/>
            <person name="Acampora D."/>
            <person name="Gogoi R."/>
            <person name="Schubert F."/>
            <person name="Lumsden A."/>
            <person name="Simeone A."/>
        </authorList>
    </citation>
    <scope>TISSUE SPECIFICITY</scope>
</reference>
<feature type="chain" id="PRO_0000434509" description="Diencephalon/mesencephalon homeobox protein 1">
    <location>
        <begin position="1"/>
        <end position="367"/>
    </location>
</feature>
<feature type="DNA-binding region" description="Homeobox" evidence="3">
    <location>
        <begin position="71"/>
        <end position="130"/>
    </location>
</feature>
<feature type="region of interest" description="Disordered" evidence="5">
    <location>
        <begin position="129"/>
        <end position="254"/>
    </location>
</feature>
<feature type="short sequence motif" description="OAR" evidence="4">
    <location>
        <begin position="344"/>
        <end position="357"/>
    </location>
</feature>
<feature type="compositionally biased region" description="Basic and acidic residues" evidence="5">
    <location>
        <begin position="133"/>
        <end position="153"/>
    </location>
</feature>
<feature type="compositionally biased region" description="Polar residues" evidence="5">
    <location>
        <begin position="159"/>
        <end position="192"/>
    </location>
</feature>
<feature type="compositionally biased region" description="Basic and acidic residues" evidence="5">
    <location>
        <begin position="203"/>
        <end position="218"/>
    </location>
</feature>
<feature type="compositionally biased region" description="Polar residues" evidence="5">
    <location>
        <begin position="233"/>
        <end position="254"/>
    </location>
</feature>
<feature type="sequence conflict" description="In Ref. 2; AAL66342." evidence="9" ref="2">
    <original>NMAP</original>
    <variation>QHWR</variation>
    <location>
        <begin position="302"/>
        <end position="305"/>
    </location>
</feature>
<proteinExistence type="evidence at transcript level"/>
<name>DMBX1_CHICK</name>
<dbReference type="EMBL" id="AADN03005565">
    <property type="status" value="NOT_ANNOTATED_CDS"/>
    <property type="molecule type" value="Genomic_DNA"/>
</dbReference>
<dbReference type="EMBL" id="AADN03005656">
    <property type="status" value="NOT_ANNOTATED_CDS"/>
    <property type="molecule type" value="Genomic_DNA"/>
</dbReference>
<dbReference type="EMBL" id="AF461038">
    <property type="protein sequence ID" value="AAL66342.1"/>
    <property type="molecule type" value="mRNA"/>
</dbReference>
<dbReference type="SMR" id="F1NEA7"/>
<dbReference type="STRING" id="9031.ENSGALP00000032474"/>
<dbReference type="GlyGen" id="F1NEA7">
    <property type="glycosylation" value="1 site"/>
</dbReference>
<dbReference type="PaxDb" id="9031-ENSGALP00000032474"/>
<dbReference type="Ensembl" id="ENSGALT00010055155.1">
    <property type="protein sequence ID" value="ENSGALP00010033366.1"/>
    <property type="gene ID" value="ENSGALG00010022675.1"/>
</dbReference>
<dbReference type="VEuPathDB" id="HostDB:geneid_395271"/>
<dbReference type="eggNOG" id="KOG0490">
    <property type="taxonomic scope" value="Eukaryota"/>
</dbReference>
<dbReference type="GeneTree" id="ENSGT00940000155505"/>
<dbReference type="HOGENOM" id="CLU_060969_0_0_1"/>
<dbReference type="InParanoid" id="F1NEA7"/>
<dbReference type="OrthoDB" id="6159439at2759"/>
<dbReference type="TreeFam" id="TF351609"/>
<dbReference type="PRO" id="PR:F1NEA7"/>
<dbReference type="Proteomes" id="UP000000539">
    <property type="component" value="Chromosome 8"/>
</dbReference>
<dbReference type="GO" id="GO:0005634">
    <property type="term" value="C:nucleus"/>
    <property type="evidence" value="ECO:0007669"/>
    <property type="project" value="UniProtKB-SubCell"/>
</dbReference>
<dbReference type="GO" id="GO:0000981">
    <property type="term" value="F:DNA-binding transcription factor activity, RNA polymerase II-specific"/>
    <property type="evidence" value="ECO:0000318"/>
    <property type="project" value="GO_Central"/>
</dbReference>
<dbReference type="GO" id="GO:0000977">
    <property type="term" value="F:RNA polymerase II transcription regulatory region sequence-specific DNA binding"/>
    <property type="evidence" value="ECO:0000318"/>
    <property type="project" value="GO_Central"/>
</dbReference>
<dbReference type="GO" id="GO:0006357">
    <property type="term" value="P:regulation of transcription by RNA polymerase II"/>
    <property type="evidence" value="ECO:0000318"/>
    <property type="project" value="GO_Central"/>
</dbReference>
<dbReference type="CDD" id="cd00086">
    <property type="entry name" value="homeodomain"/>
    <property type="match status" value="1"/>
</dbReference>
<dbReference type="FunFam" id="1.10.10.60:FF:000125">
    <property type="entry name" value="diencephalon/mesencephalon homeobox protein 1"/>
    <property type="match status" value="1"/>
</dbReference>
<dbReference type="Gene3D" id="1.10.10.60">
    <property type="entry name" value="Homeodomain-like"/>
    <property type="match status" value="1"/>
</dbReference>
<dbReference type="InterPro" id="IPR052488">
    <property type="entry name" value="DMBX_homeobox"/>
</dbReference>
<dbReference type="InterPro" id="IPR001356">
    <property type="entry name" value="HD"/>
</dbReference>
<dbReference type="InterPro" id="IPR017970">
    <property type="entry name" value="Homeobox_CS"/>
</dbReference>
<dbReference type="InterPro" id="IPR009057">
    <property type="entry name" value="Homeodomain-like_sf"/>
</dbReference>
<dbReference type="InterPro" id="IPR003654">
    <property type="entry name" value="OAR_dom"/>
</dbReference>
<dbReference type="PANTHER" id="PTHR46639">
    <property type="entry name" value="DIENCEPHALON/MESENCEPHALON HOMEOBOX PROTEIN 1"/>
    <property type="match status" value="1"/>
</dbReference>
<dbReference type="PANTHER" id="PTHR46639:SF2">
    <property type="entry name" value="DIENCEPHALON_MESENCEPHALON HOMEOBOX PROTEIN 1"/>
    <property type="match status" value="1"/>
</dbReference>
<dbReference type="Pfam" id="PF00046">
    <property type="entry name" value="Homeodomain"/>
    <property type="match status" value="1"/>
</dbReference>
<dbReference type="Pfam" id="PF03826">
    <property type="entry name" value="OAR"/>
    <property type="match status" value="1"/>
</dbReference>
<dbReference type="SMART" id="SM00389">
    <property type="entry name" value="HOX"/>
    <property type="match status" value="1"/>
</dbReference>
<dbReference type="SUPFAM" id="SSF46689">
    <property type="entry name" value="Homeodomain-like"/>
    <property type="match status" value="1"/>
</dbReference>
<dbReference type="PROSITE" id="PS00027">
    <property type="entry name" value="HOMEOBOX_1"/>
    <property type="match status" value="1"/>
</dbReference>
<dbReference type="PROSITE" id="PS50071">
    <property type="entry name" value="HOMEOBOX_2"/>
    <property type="match status" value="1"/>
</dbReference>
<dbReference type="PROSITE" id="PS50803">
    <property type="entry name" value="OAR"/>
    <property type="match status" value="1"/>
</dbReference>
<keyword id="KW-0217">Developmental protein</keyword>
<keyword id="KW-0238">DNA-binding</keyword>
<keyword id="KW-0371">Homeobox</keyword>
<keyword id="KW-0539">Nucleus</keyword>
<keyword id="KW-1185">Reference proteome</keyword>
<keyword id="KW-0678">Repressor</keyword>
<keyword id="KW-0804">Transcription</keyword>
<keyword id="KW-0805">Transcription regulation</keyword>
<organism evidence="11">
    <name type="scientific">Gallus gallus</name>
    <name type="common">Chicken</name>
    <dbReference type="NCBI Taxonomy" id="9031"/>
    <lineage>
        <taxon>Eukaryota</taxon>
        <taxon>Metazoa</taxon>
        <taxon>Chordata</taxon>
        <taxon>Craniata</taxon>
        <taxon>Vertebrata</taxon>
        <taxon>Euteleostomi</taxon>
        <taxon>Archelosauria</taxon>
        <taxon>Archosauria</taxon>
        <taxon>Dinosauria</taxon>
        <taxon>Saurischia</taxon>
        <taxon>Theropoda</taxon>
        <taxon>Coelurosauria</taxon>
        <taxon>Aves</taxon>
        <taxon>Neognathae</taxon>
        <taxon>Galloanserae</taxon>
        <taxon>Galliformes</taxon>
        <taxon>Phasianidae</taxon>
        <taxon>Phasianinae</taxon>
        <taxon>Gallus</taxon>
    </lineage>
</organism>
<accession>F1NEA7</accession>
<accession>Q8UVD8</accession>
<evidence type="ECO:0000250" key="1">
    <source>
        <dbReference type="UniProtKB" id="Q8NFW5"/>
    </source>
</evidence>
<evidence type="ECO:0000250" key="2">
    <source>
        <dbReference type="UniProtKB" id="Q91ZK4"/>
    </source>
</evidence>
<evidence type="ECO:0000255" key="3">
    <source>
        <dbReference type="PROSITE-ProRule" id="PRU00108"/>
    </source>
</evidence>
<evidence type="ECO:0000255" key="4">
    <source>
        <dbReference type="PROSITE-ProRule" id="PRU00138"/>
    </source>
</evidence>
<evidence type="ECO:0000256" key="5">
    <source>
        <dbReference type="SAM" id="MobiDB-lite"/>
    </source>
</evidence>
<evidence type="ECO:0000269" key="6">
    <source>
    </source>
</evidence>
<evidence type="ECO:0000269" key="7">
    <source>
    </source>
</evidence>
<evidence type="ECO:0000303" key="8">
    <source>
    </source>
</evidence>
<evidence type="ECO:0000305" key="9"/>
<evidence type="ECO:0000312" key="10">
    <source>
        <dbReference type="EMBL" id="AAL66342.1"/>
    </source>
</evidence>
<evidence type="ECO:0000312" key="11">
    <source>
        <dbReference type="Proteomes" id="UP000000539"/>
    </source>
</evidence>
<comment type="function">
    <text evidence="2">Functions as a transcriptional repressor. Required for brain development.</text>
</comment>
<comment type="subunit">
    <text evidence="2">Homodimer.</text>
</comment>
<comment type="subcellular location">
    <subcellularLocation>
        <location evidence="3">Nucleus</location>
    </subcellularLocation>
</comment>
<comment type="tissue specificity">
    <text evidence="6 7">In the embryo, expressed in the developing central nervous system and in other tissues including the developing digestive system (PubMed:12175514). At 9.7 dpc, expression is restricted to the midbrain and pretectum (PubMed:11731459).</text>
</comment>
<comment type="developmental stage">
    <text evidence="7">Expression detected from HH stage 4.</text>
</comment>
<comment type="similarity">
    <text evidence="9">Belongs to the paired homeobox family.</text>
</comment>
<gene>
    <name evidence="1" type="primary">DMBX1</name>
    <name evidence="8" type="synonym">ATX</name>
</gene>
<sequence length="367" mass="41001">MQHYGVNGYSLHAMNSLSAMYNLHQQAAQQAQHAPDYRPSVHALTLAERLAGCTFQDIILEARYGSQHRKQRRSRTAFTAQQLEALEKTFQKTHYPDVVMRERLAMCTNLPEARVQVWFKNRRAKFRKKQRSLQKEQLQKQKDCESSHSEGKTEPPVLETQSTIPDTEKTQSIPSEVSTDLNLTLSEQSASESAPEDQTDREEEFKSTLDEAKVDKSPGVDGKALNCKRASPKSESPISATVTPSSSSGLAQTHSYSSSPLSLFRLQEQFRQHMAATNNLVHYSSFEMGTPSAMPYLGMNVNMAPLSSLHCQSYYQSLSHAQQVWSSPILQASSSLPSLNSKTTSIENLRLRAKQHAASLGLDTLPN</sequence>
<protein>
    <recommendedName>
        <fullName evidence="1">Diencephalon/mesencephalon homeobox protein 1</fullName>
    </recommendedName>
</protein>